<sequence>MQKGAKIEDEGRQSRIQSRNFIIQRSDPRTRGSSVYSSRSSSYNVRSSISPGVYQQLSSSGITDFKGNREKEKREMQNLNERLASYIEKVHFLDAQVKKLEAENEALRNRKVEDLQPIRDAYENELRQARKVIDELASSKGVAEGKLAGLQDEIGSLRELIVTYESQAKDYRKKIDSLGNQLGEFEGELQSLRLRVGSLEDENAKLRELLEKVQEQNRRLRADLDTETAAHIEADCLAQTKTEEAEFYRDLLDQLELLKPEPIQIKGMDYADFWKSELAKCVREINLAYDEKIDLIQQDCEAKYASQINQLRSGNVKDGMQLQHSQEEVKKLRGQLQDKNAAYAELATRIASLQAERDELARQLADIERELEEQKLKYNRDVGDLESELTSVLAQLQHLMDAKMSLELEIACYKKLLEGEESRVGLRTLVEQAIGTQSKGSASLKDAIQSSS</sequence>
<dbReference type="EMBL" id="AY524862">
    <property type="protein sequence ID" value="AAT01542.1"/>
    <property type="molecule type" value="mRNA"/>
</dbReference>
<dbReference type="SMR" id="Q6QUW1"/>
<dbReference type="GO" id="GO:0005882">
    <property type="term" value="C:intermediate filament"/>
    <property type="evidence" value="ECO:0007669"/>
    <property type="project" value="UniProtKB-KW"/>
</dbReference>
<dbReference type="GO" id="GO:0005635">
    <property type="term" value="C:nuclear envelope"/>
    <property type="evidence" value="ECO:0007669"/>
    <property type="project" value="TreeGrafter"/>
</dbReference>
<dbReference type="GO" id="GO:0005652">
    <property type="term" value="C:nuclear lamina"/>
    <property type="evidence" value="ECO:0007669"/>
    <property type="project" value="TreeGrafter"/>
</dbReference>
<dbReference type="GO" id="GO:0005200">
    <property type="term" value="F:structural constituent of cytoskeleton"/>
    <property type="evidence" value="ECO:0007669"/>
    <property type="project" value="TreeGrafter"/>
</dbReference>
<dbReference type="GO" id="GO:0031507">
    <property type="term" value="P:heterochromatin formation"/>
    <property type="evidence" value="ECO:0007669"/>
    <property type="project" value="TreeGrafter"/>
</dbReference>
<dbReference type="GO" id="GO:0006998">
    <property type="term" value="P:nuclear envelope organization"/>
    <property type="evidence" value="ECO:0007669"/>
    <property type="project" value="TreeGrafter"/>
</dbReference>
<dbReference type="GO" id="GO:0007097">
    <property type="term" value="P:nuclear migration"/>
    <property type="evidence" value="ECO:0007669"/>
    <property type="project" value="TreeGrafter"/>
</dbReference>
<dbReference type="GO" id="GO:0051664">
    <property type="term" value="P:nuclear pore localization"/>
    <property type="evidence" value="ECO:0007669"/>
    <property type="project" value="TreeGrafter"/>
</dbReference>
<dbReference type="GO" id="GO:0090435">
    <property type="term" value="P:protein localization to nuclear envelope"/>
    <property type="evidence" value="ECO:0007669"/>
    <property type="project" value="TreeGrafter"/>
</dbReference>
<dbReference type="Gene3D" id="1.20.5.170">
    <property type="match status" value="1"/>
</dbReference>
<dbReference type="Gene3D" id="1.20.5.1160">
    <property type="entry name" value="Vasodilator-stimulated phosphoprotein"/>
    <property type="match status" value="2"/>
</dbReference>
<dbReference type="InterPro" id="IPR018039">
    <property type="entry name" value="IF_conserved"/>
</dbReference>
<dbReference type="InterPro" id="IPR039008">
    <property type="entry name" value="IF_rod_dom"/>
</dbReference>
<dbReference type="PANTHER" id="PTHR45721:SF12">
    <property type="entry name" value="INTERMEDIATE FILAMENT PROTEIN IFA-1"/>
    <property type="match status" value="1"/>
</dbReference>
<dbReference type="PANTHER" id="PTHR45721">
    <property type="entry name" value="LAMIN DM0-RELATED"/>
    <property type="match status" value="1"/>
</dbReference>
<dbReference type="Pfam" id="PF00038">
    <property type="entry name" value="Filament"/>
    <property type="match status" value="2"/>
</dbReference>
<dbReference type="SMART" id="SM01391">
    <property type="entry name" value="Filament"/>
    <property type="match status" value="1"/>
</dbReference>
<dbReference type="SUPFAM" id="SSF64593">
    <property type="entry name" value="Intermediate filament protein, coiled coil region"/>
    <property type="match status" value="2"/>
</dbReference>
<dbReference type="SUPFAM" id="SSF57997">
    <property type="entry name" value="Tropomyosin"/>
    <property type="match status" value="1"/>
</dbReference>
<dbReference type="PROSITE" id="PS00226">
    <property type="entry name" value="IF_ROD_1"/>
    <property type="match status" value="1"/>
</dbReference>
<dbReference type="PROSITE" id="PS51842">
    <property type="entry name" value="IF_ROD_2"/>
    <property type="match status" value="1"/>
</dbReference>
<reference key="1">
    <citation type="journal article" date="2004" name="Mol. Cell. Proteomics">
        <title>Differential proteomics reveals multiple components in retrogradely transported axoplasm after nerve injury.</title>
        <authorList>
            <person name="Perlson E."/>
            <person name="Medzihradszky K.F."/>
            <person name="Darula Z."/>
            <person name="Munno D.W."/>
            <person name="Syed N.I."/>
            <person name="Burlingame A.L."/>
            <person name="Fainzilber M."/>
        </authorList>
    </citation>
    <scope>NUCLEOTIDE SEQUENCE [MRNA]</scope>
</reference>
<reference key="2">
    <citation type="journal article" date="2004" name="Mol. Cell. Proteomics">
        <title>O-sulfonation of serine and threonine: mass spectrometric detection and characterization of a new posttranslational modification in diverse proteins throughout the eukaryotes.</title>
        <authorList>
            <person name="Medzihradszky K.F."/>
            <person name="Darula Z."/>
            <person name="Perlson E."/>
            <person name="Fainzilber M."/>
            <person name="Chalkley R.J."/>
            <person name="Ball H."/>
            <person name="Greenbaum D."/>
            <person name="Bogyo M."/>
            <person name="Tyson D.R."/>
            <person name="Bradshaw R.A."/>
            <person name="Burlingame A.L."/>
        </authorList>
    </citation>
    <scope>IDENTIFICATION BY MASS SPECTROMETRY</scope>
    <scope>SULFATION AT SER-156</scope>
    <source>
        <tissue>Nerve</tissue>
    </source>
</reference>
<evidence type="ECO:0000255" key="1">
    <source>
        <dbReference type="PROSITE-ProRule" id="PRU01188"/>
    </source>
</evidence>
<evidence type="ECO:0000256" key="2">
    <source>
        <dbReference type="SAM" id="MobiDB-lite"/>
    </source>
</evidence>
<evidence type="ECO:0000269" key="3">
    <source>
    </source>
</evidence>
<accession>Q6QUW1</accession>
<gene>
    <name type="primary">RGP51</name>
</gene>
<keyword id="KW-0175">Coiled coil</keyword>
<keyword id="KW-0403">Intermediate filament</keyword>
<keyword id="KW-0765">Sulfation</keyword>
<proteinExistence type="evidence at protein level"/>
<organism>
    <name type="scientific">Lymnaea stagnalis</name>
    <name type="common">Great pond snail</name>
    <name type="synonym">Helix stagnalis</name>
    <dbReference type="NCBI Taxonomy" id="6523"/>
    <lineage>
        <taxon>Eukaryota</taxon>
        <taxon>Metazoa</taxon>
        <taxon>Spiralia</taxon>
        <taxon>Lophotrochozoa</taxon>
        <taxon>Mollusca</taxon>
        <taxon>Gastropoda</taxon>
        <taxon>Heterobranchia</taxon>
        <taxon>Euthyneura</taxon>
        <taxon>Panpulmonata</taxon>
        <taxon>Hygrophila</taxon>
        <taxon>Lymnaeoidea</taxon>
        <taxon>Lymnaeidae</taxon>
        <taxon>Lymnaea</taxon>
    </lineage>
</organism>
<protein>
    <recommendedName>
        <fullName>Retrograde protein of 51 kDa</fullName>
    </recommendedName>
</protein>
<feature type="chain" id="PRO_0000349090" description="Retrograde protein of 51 kDa">
    <location>
        <begin position="1"/>
        <end position="452"/>
    </location>
</feature>
<feature type="domain" description="IF rod" evidence="1">
    <location>
        <begin position="72"/>
        <end position="424"/>
    </location>
</feature>
<feature type="region of interest" description="Head">
    <location>
        <begin position="1"/>
        <end position="75"/>
    </location>
</feature>
<feature type="region of interest" description="Disordered" evidence="2">
    <location>
        <begin position="1"/>
        <end position="50"/>
    </location>
</feature>
<feature type="region of interest" description="Coil 1A">
    <location>
        <begin position="76"/>
        <end position="111"/>
    </location>
</feature>
<feature type="region of interest" description="Linker 1">
    <location>
        <begin position="112"/>
        <end position="121"/>
    </location>
</feature>
<feature type="region of interest" description="Coil 1B">
    <location>
        <begin position="122"/>
        <end position="259"/>
    </location>
</feature>
<feature type="region of interest" description="Linker 12">
    <location>
        <begin position="260"/>
        <end position="278"/>
    </location>
</feature>
<feature type="region of interest" description="Coil 2">
    <location>
        <begin position="279"/>
        <end position="424"/>
    </location>
</feature>
<feature type="region of interest" description="Tail">
    <location>
        <begin position="425"/>
        <end position="452"/>
    </location>
</feature>
<feature type="compositionally biased region" description="Basic and acidic residues" evidence="2">
    <location>
        <begin position="1"/>
        <end position="13"/>
    </location>
</feature>
<feature type="compositionally biased region" description="Polar residues" evidence="2">
    <location>
        <begin position="14"/>
        <end position="23"/>
    </location>
</feature>
<feature type="compositionally biased region" description="Low complexity" evidence="2">
    <location>
        <begin position="33"/>
        <end position="50"/>
    </location>
</feature>
<feature type="modified residue" description="Sulfoserine" evidence="3">
    <location>
        <position position="156"/>
    </location>
</feature>
<comment type="similarity">
    <text evidence="1">Belongs to the intermediate filament family.</text>
</comment>
<name>RGP51_LYMST</name>